<accession>P0C584</accession>
<accession>A7UVU6</accession>
<accession>Q7RYS8</accession>
<evidence type="ECO:0000250" key="1"/>
<evidence type="ECO:0000255" key="2"/>
<evidence type="ECO:0000255" key="3">
    <source>
        <dbReference type="PROSITE-ProRule" id="PRU01161"/>
    </source>
</evidence>
<evidence type="ECO:0000256" key="4">
    <source>
        <dbReference type="SAM" id="MobiDB-lite"/>
    </source>
</evidence>
<evidence type="ECO:0000305" key="5"/>
<gene>
    <name type="ORF">NCU00381</name>
    <name type="ORF">NCU11180</name>
</gene>
<feature type="chain" id="PRO_0000295563" description="Patatin-like phospholipase domain-containing protein NCU11180">
    <location>
        <begin position="1"/>
        <end position="870"/>
    </location>
</feature>
<feature type="transmembrane region" description="Helical" evidence="2">
    <location>
        <begin position="183"/>
        <end position="203"/>
    </location>
</feature>
<feature type="domain" description="PNPLA" evidence="3">
    <location>
        <begin position="399"/>
        <end position="590"/>
    </location>
</feature>
<feature type="region of interest" description="Disordered" evidence="4">
    <location>
        <begin position="1"/>
        <end position="24"/>
    </location>
</feature>
<feature type="region of interest" description="Disordered" evidence="4">
    <location>
        <begin position="131"/>
        <end position="158"/>
    </location>
</feature>
<feature type="region of interest" description="Disordered" evidence="4">
    <location>
        <begin position="281"/>
        <end position="320"/>
    </location>
</feature>
<feature type="region of interest" description="Disordered" evidence="4">
    <location>
        <begin position="735"/>
        <end position="786"/>
    </location>
</feature>
<feature type="region of interest" description="Disordered" evidence="4">
    <location>
        <begin position="804"/>
        <end position="870"/>
    </location>
</feature>
<feature type="short sequence motif" description="GXSXG" evidence="3">
    <location>
        <begin position="430"/>
        <end position="434"/>
    </location>
</feature>
<feature type="compositionally biased region" description="Basic and acidic residues" evidence="4">
    <location>
        <begin position="131"/>
        <end position="141"/>
    </location>
</feature>
<feature type="compositionally biased region" description="Basic residues" evidence="4">
    <location>
        <begin position="142"/>
        <end position="155"/>
    </location>
</feature>
<feature type="compositionally biased region" description="Polar residues" evidence="4">
    <location>
        <begin position="289"/>
        <end position="308"/>
    </location>
</feature>
<feature type="compositionally biased region" description="Acidic residues" evidence="4">
    <location>
        <begin position="818"/>
        <end position="834"/>
    </location>
</feature>
<feature type="active site" description="Nucleophile" evidence="3">
    <location>
        <position position="432"/>
    </location>
</feature>
<feature type="active site" description="Proton acceptor" evidence="3">
    <location>
        <position position="577"/>
    </location>
</feature>
<keyword id="KW-0378">Hydrolase</keyword>
<keyword id="KW-0442">Lipid degradation</keyword>
<keyword id="KW-0443">Lipid metabolism</keyword>
<keyword id="KW-0472">Membrane</keyword>
<keyword id="KW-1185">Reference proteome</keyword>
<keyword id="KW-0812">Transmembrane</keyword>
<keyword id="KW-1133">Transmembrane helix</keyword>
<comment type="function">
    <text evidence="1">Probable lipid hydrolase.</text>
</comment>
<comment type="subcellular location">
    <subcellularLocation>
        <location evidence="5">Membrane</location>
        <topology evidence="5">Single-pass membrane protein</topology>
    </subcellularLocation>
</comment>
<comment type="similarity">
    <text evidence="5">Belongs to the PLPL family.</text>
</comment>
<sequence>MADDTDNPPNIQIPAKSYGFPPEAFDPRRLPDYDTNFLPAHDLEAFIQALAAPDFVQSPDDASSMRLNSPGLHSPSSLDITKDDYDHSEARAALASVADVAAPGGGNNHHRRTSTGTFFSAHNDWAPVSEKVIKTDRDEKRNKRGKDRKNKKPRKGVAPLRTLVGTRSKDETREGYLYSLLKWPFLLFVSFWIVGLGMAYLATRFYIYFYEQFVAWRGRREQLRRAMRATGNYKDWVAAARNMDDFFGNQRWKEENDFAYYDSKTVRRVWDQMRRCREKAEEVERELESQSQNSDSGVASGEETSNTKAGGGNNGNDKKTQPVEDLKALIEACVKNNFVGIENPRLYSQTYYGTKNLVQNYVDEVERSIKFLIDTKQLTKEQKRVMFKGICANYGRTALCLSGGATFAYYHFGVVKALLEVDYLPDIITGTSGGALVAALVATRTNDELKELLNPALAHKITACRESFTVWFWRWWKTGARFDSVDWAKQCAWWCHGSLTFREAYERTGRILNVSCVPSDPHSPTILCNYLTSPDCVIWSAVLASAAVPGILNPVVLMMKNRDGSLEPYSFGHKWKDGSLRTDIPIKSLNLHFNVNFSIVSQVNPHINLFFFSSRGSVGQPVTHRKGRGWRGGYLGSATEQYIKLDLTKWLRVLRQLELLPRPLGQDWSQLWLQTFGGTVTIWPKSIPSDFLKILSDPDPPRLARMIHEGQQSAFPKVKFIANRLKIERLVERGRRETRDRRNAANAFTATGDGEGSYASHSIVDAMGGKHPLAPSSSGGAGDRRGSIESILSEDDLRSLLIKGREGVHTSGGSSTGTEDELTMTELEGEDDDGGTSRVSEGGSRNRYFEGALEEEDGALEVAASDHSRT</sequence>
<organism>
    <name type="scientific">Neurospora crassa (strain ATCC 24698 / 74-OR23-1A / CBS 708.71 / DSM 1257 / FGSC 987)</name>
    <dbReference type="NCBI Taxonomy" id="367110"/>
    <lineage>
        <taxon>Eukaryota</taxon>
        <taxon>Fungi</taxon>
        <taxon>Dikarya</taxon>
        <taxon>Ascomycota</taxon>
        <taxon>Pezizomycotina</taxon>
        <taxon>Sordariomycetes</taxon>
        <taxon>Sordariomycetidae</taxon>
        <taxon>Sordariales</taxon>
        <taxon>Sordariaceae</taxon>
        <taxon>Neurospora</taxon>
    </lineage>
</organism>
<name>PLPL_NEUCR</name>
<dbReference type="EC" id="3.1.1.-"/>
<dbReference type="EMBL" id="CM002238">
    <property type="protein sequence ID" value="EDO65416.1"/>
    <property type="molecule type" value="Genomic_DNA"/>
</dbReference>
<dbReference type="RefSeq" id="XP_001728507.1">
    <property type="nucleotide sequence ID" value="XM_001728455.2"/>
</dbReference>
<dbReference type="STRING" id="367110.P0C584"/>
<dbReference type="PaxDb" id="5141-EFNCRP00000000213"/>
<dbReference type="EnsemblFungi" id="EDO65416">
    <property type="protein sequence ID" value="EDO65416"/>
    <property type="gene ID" value="NCU11180"/>
</dbReference>
<dbReference type="GeneID" id="5847897"/>
<dbReference type="KEGG" id="ncr:NCU11180"/>
<dbReference type="VEuPathDB" id="FungiDB:NCU11180"/>
<dbReference type="HOGENOM" id="CLU_009031_2_0_1"/>
<dbReference type="InParanoid" id="P0C584"/>
<dbReference type="OrthoDB" id="15478at2759"/>
<dbReference type="Proteomes" id="UP000001805">
    <property type="component" value="Chromosome 3, Linkage Group III"/>
</dbReference>
<dbReference type="GO" id="GO:0016020">
    <property type="term" value="C:membrane"/>
    <property type="evidence" value="ECO:0007669"/>
    <property type="project" value="UniProtKB-SubCell"/>
</dbReference>
<dbReference type="GO" id="GO:0004806">
    <property type="term" value="F:triacylglycerol lipase activity"/>
    <property type="evidence" value="ECO:0007669"/>
    <property type="project" value="InterPro"/>
</dbReference>
<dbReference type="GO" id="GO:0016042">
    <property type="term" value="P:lipid catabolic process"/>
    <property type="evidence" value="ECO:0007669"/>
    <property type="project" value="UniProtKB-KW"/>
</dbReference>
<dbReference type="GO" id="GO:0006641">
    <property type="term" value="P:triglyceride metabolic process"/>
    <property type="evidence" value="ECO:0007669"/>
    <property type="project" value="UniProtKB-ARBA"/>
</dbReference>
<dbReference type="CDD" id="cd07232">
    <property type="entry name" value="Pat_PLPL"/>
    <property type="match status" value="1"/>
</dbReference>
<dbReference type="Gene3D" id="3.40.1090.10">
    <property type="entry name" value="Cytosolic phospholipase A2 catalytic domain"/>
    <property type="match status" value="2"/>
</dbReference>
<dbReference type="InterPro" id="IPR016035">
    <property type="entry name" value="Acyl_Trfase/lysoPLipase"/>
</dbReference>
<dbReference type="InterPro" id="IPR050301">
    <property type="entry name" value="NTE"/>
</dbReference>
<dbReference type="InterPro" id="IPR002641">
    <property type="entry name" value="PNPLA_dom"/>
</dbReference>
<dbReference type="InterPro" id="IPR021771">
    <property type="entry name" value="Triacylglycerol_lipase_N"/>
</dbReference>
<dbReference type="PANTHER" id="PTHR14226">
    <property type="entry name" value="NEUROPATHY TARGET ESTERASE/SWISS CHEESE D.MELANOGASTER"/>
    <property type="match status" value="1"/>
</dbReference>
<dbReference type="PANTHER" id="PTHR14226:SF66">
    <property type="entry name" value="TRIACYLGLYCEROL LIPASE PTL2"/>
    <property type="match status" value="1"/>
</dbReference>
<dbReference type="Pfam" id="PF11815">
    <property type="entry name" value="DUF3336"/>
    <property type="match status" value="1"/>
</dbReference>
<dbReference type="Pfam" id="PF01734">
    <property type="entry name" value="Patatin"/>
    <property type="match status" value="1"/>
</dbReference>
<dbReference type="SUPFAM" id="SSF52151">
    <property type="entry name" value="FabD/lysophospholipase-like"/>
    <property type="match status" value="1"/>
</dbReference>
<dbReference type="PROSITE" id="PS51635">
    <property type="entry name" value="PNPLA"/>
    <property type="match status" value="1"/>
</dbReference>
<proteinExistence type="inferred from homology"/>
<protein>
    <recommendedName>
        <fullName>Patatin-like phospholipase domain-containing protein NCU11180</fullName>
        <ecNumber>3.1.1.-</ecNumber>
    </recommendedName>
</protein>
<reference key="1">
    <citation type="journal article" date="2003" name="Nature">
        <title>The genome sequence of the filamentous fungus Neurospora crassa.</title>
        <authorList>
            <person name="Galagan J.E."/>
            <person name="Calvo S.E."/>
            <person name="Borkovich K.A."/>
            <person name="Selker E.U."/>
            <person name="Read N.D."/>
            <person name="Jaffe D.B."/>
            <person name="FitzHugh W."/>
            <person name="Ma L.-J."/>
            <person name="Smirnov S."/>
            <person name="Purcell S."/>
            <person name="Rehman B."/>
            <person name="Elkins T."/>
            <person name="Engels R."/>
            <person name="Wang S."/>
            <person name="Nielsen C.B."/>
            <person name="Butler J."/>
            <person name="Endrizzi M."/>
            <person name="Qui D."/>
            <person name="Ianakiev P."/>
            <person name="Bell-Pedersen D."/>
            <person name="Nelson M.A."/>
            <person name="Werner-Washburne M."/>
            <person name="Selitrennikoff C.P."/>
            <person name="Kinsey J.A."/>
            <person name="Braun E.L."/>
            <person name="Zelter A."/>
            <person name="Schulte U."/>
            <person name="Kothe G.O."/>
            <person name="Jedd G."/>
            <person name="Mewes H.-W."/>
            <person name="Staben C."/>
            <person name="Marcotte E."/>
            <person name="Greenberg D."/>
            <person name="Roy A."/>
            <person name="Foley K."/>
            <person name="Naylor J."/>
            <person name="Stange-Thomann N."/>
            <person name="Barrett R."/>
            <person name="Gnerre S."/>
            <person name="Kamal M."/>
            <person name="Kamvysselis M."/>
            <person name="Mauceli E.W."/>
            <person name="Bielke C."/>
            <person name="Rudd S."/>
            <person name="Frishman D."/>
            <person name="Krystofova S."/>
            <person name="Rasmussen C."/>
            <person name="Metzenberg R.L."/>
            <person name="Perkins D.D."/>
            <person name="Kroken S."/>
            <person name="Cogoni C."/>
            <person name="Macino G."/>
            <person name="Catcheside D.E.A."/>
            <person name="Li W."/>
            <person name="Pratt R.J."/>
            <person name="Osmani S.A."/>
            <person name="DeSouza C.P.C."/>
            <person name="Glass N.L."/>
            <person name="Orbach M.J."/>
            <person name="Berglund J.A."/>
            <person name="Voelker R."/>
            <person name="Yarden O."/>
            <person name="Plamann M."/>
            <person name="Seiler S."/>
            <person name="Dunlap J.C."/>
            <person name="Radford A."/>
            <person name="Aramayo R."/>
            <person name="Natvig D.O."/>
            <person name="Alex L.A."/>
            <person name="Mannhaupt G."/>
            <person name="Ebbole D.J."/>
            <person name="Freitag M."/>
            <person name="Paulsen I."/>
            <person name="Sachs M.S."/>
            <person name="Lander E.S."/>
            <person name="Nusbaum C."/>
            <person name="Birren B.W."/>
        </authorList>
    </citation>
    <scope>NUCLEOTIDE SEQUENCE [LARGE SCALE GENOMIC DNA]</scope>
    <source>
        <strain>ATCC 24698 / 74-OR23-1A / CBS 708.71 / DSM 1257 / FGSC 987</strain>
    </source>
</reference>